<sequence length="125" mass="13792">MKYQGKSTRKATGGRLRLNRSKRKFELGRDFTIPVIGAQKLKVLNVTGNGSKVRVLKSDVVNVTDPKTGKTQKVKMTTVTENPANKNYVRRNFLTKGTFVTTELGKARITNRPGQDGCINAVLVA</sequence>
<evidence type="ECO:0000255" key="1">
    <source>
        <dbReference type="HAMAP-Rule" id="MF_00029"/>
    </source>
</evidence>
<evidence type="ECO:0000305" key="2"/>
<protein>
    <recommendedName>
        <fullName evidence="1">Small ribosomal subunit protein eS8</fullName>
    </recommendedName>
    <alternativeName>
        <fullName evidence="2">30S ribosomal protein S8e</fullName>
    </alternativeName>
</protein>
<dbReference type="EMBL" id="AM114193">
    <property type="protein sequence ID" value="CAJ37728.1"/>
    <property type="molecule type" value="Genomic_DNA"/>
</dbReference>
<dbReference type="RefSeq" id="WP_012034858.1">
    <property type="nucleotide sequence ID" value="NC_009464.1"/>
</dbReference>
<dbReference type="SMR" id="Q0W1L5"/>
<dbReference type="STRING" id="351160.RCIX2682"/>
<dbReference type="GeneID" id="5144506"/>
<dbReference type="KEGG" id="rci:RCIX2682"/>
<dbReference type="eggNOG" id="arCOG04154">
    <property type="taxonomic scope" value="Archaea"/>
</dbReference>
<dbReference type="OrthoDB" id="372305at2157"/>
<dbReference type="Proteomes" id="UP000000663">
    <property type="component" value="Chromosome"/>
</dbReference>
<dbReference type="GO" id="GO:1990904">
    <property type="term" value="C:ribonucleoprotein complex"/>
    <property type="evidence" value="ECO:0007669"/>
    <property type="project" value="UniProtKB-KW"/>
</dbReference>
<dbReference type="GO" id="GO:0005840">
    <property type="term" value="C:ribosome"/>
    <property type="evidence" value="ECO:0007669"/>
    <property type="project" value="UniProtKB-KW"/>
</dbReference>
<dbReference type="GO" id="GO:0003735">
    <property type="term" value="F:structural constituent of ribosome"/>
    <property type="evidence" value="ECO:0007669"/>
    <property type="project" value="InterPro"/>
</dbReference>
<dbReference type="GO" id="GO:0006412">
    <property type="term" value="P:translation"/>
    <property type="evidence" value="ECO:0007669"/>
    <property type="project" value="UniProtKB-UniRule"/>
</dbReference>
<dbReference type="CDD" id="cd11382">
    <property type="entry name" value="Ribosomal_S8e"/>
    <property type="match status" value="1"/>
</dbReference>
<dbReference type="Gene3D" id="2.40.10.310">
    <property type="match status" value="1"/>
</dbReference>
<dbReference type="HAMAP" id="MF_00029">
    <property type="entry name" value="Ribosomal_eS8"/>
    <property type="match status" value="1"/>
</dbReference>
<dbReference type="InterPro" id="IPR001047">
    <property type="entry name" value="Ribosomal_eS8"/>
</dbReference>
<dbReference type="InterPro" id="IPR018283">
    <property type="entry name" value="Ribosomal_eS8_CS"/>
</dbReference>
<dbReference type="InterPro" id="IPR020919">
    <property type="entry name" value="Ribosomal_protein_eS8_arc"/>
</dbReference>
<dbReference type="InterPro" id="IPR022309">
    <property type="entry name" value="Ribosomal_Se8/biogenesis_NSA2"/>
</dbReference>
<dbReference type="NCBIfam" id="TIGR00307">
    <property type="entry name" value="eS8"/>
    <property type="match status" value="1"/>
</dbReference>
<dbReference type="PANTHER" id="PTHR10394">
    <property type="entry name" value="40S RIBOSOMAL PROTEIN S8"/>
    <property type="match status" value="1"/>
</dbReference>
<dbReference type="Pfam" id="PF01201">
    <property type="entry name" value="Ribosomal_S8e"/>
    <property type="match status" value="1"/>
</dbReference>
<dbReference type="PROSITE" id="PS01193">
    <property type="entry name" value="RIBOSOMAL_S8E"/>
    <property type="match status" value="1"/>
</dbReference>
<reference key="1">
    <citation type="journal article" date="2006" name="Science">
        <title>Genome of rice cluster I archaea -- the key methane producers in the rice rhizosphere.</title>
        <authorList>
            <person name="Erkel C."/>
            <person name="Kube M."/>
            <person name="Reinhardt R."/>
            <person name="Liesack W."/>
        </authorList>
    </citation>
    <scope>NUCLEOTIDE SEQUENCE [LARGE SCALE GENOMIC DNA]</scope>
    <source>
        <strain>DSM 22066 / NBRC 105507 / MRE50</strain>
    </source>
</reference>
<proteinExistence type="inferred from homology"/>
<accession>Q0W1L5</accession>
<feature type="chain" id="PRO_0000304180" description="Small ribosomal subunit protein eS8">
    <location>
        <begin position="1"/>
        <end position="125"/>
    </location>
</feature>
<name>RS8E_METAR</name>
<gene>
    <name evidence="1" type="primary">rps8e</name>
    <name type="ordered locus">UNCMA_05290</name>
    <name type="ORF">RCIX2682</name>
</gene>
<organism>
    <name type="scientific">Methanocella arvoryzae (strain DSM 22066 / NBRC 105507 / MRE50)</name>
    <dbReference type="NCBI Taxonomy" id="351160"/>
    <lineage>
        <taxon>Archaea</taxon>
        <taxon>Methanobacteriati</taxon>
        <taxon>Methanobacteriota</taxon>
        <taxon>Stenosarchaea group</taxon>
        <taxon>Methanomicrobia</taxon>
        <taxon>Methanocellales</taxon>
        <taxon>Methanocellaceae</taxon>
        <taxon>Methanocella</taxon>
    </lineage>
</organism>
<keyword id="KW-1185">Reference proteome</keyword>
<keyword id="KW-0687">Ribonucleoprotein</keyword>
<keyword id="KW-0689">Ribosomal protein</keyword>
<comment type="subunit">
    <text evidence="1">Part of the 30S ribosomal subunit.</text>
</comment>
<comment type="similarity">
    <text evidence="1">Belongs to the eukaryotic ribosomal protein eS8 family.</text>
</comment>